<dbReference type="EC" id="1.3.5.2" evidence="1"/>
<dbReference type="EMBL" id="CP001364">
    <property type="protein sequence ID" value="ACM55594.1"/>
    <property type="molecule type" value="Genomic_DNA"/>
</dbReference>
<dbReference type="SMR" id="B9LHC1"/>
<dbReference type="KEGG" id="chl:Chy400_4240"/>
<dbReference type="HOGENOM" id="CLU_013640_2_0_0"/>
<dbReference type="OrthoDB" id="9802377at2"/>
<dbReference type="UniPathway" id="UPA00070">
    <property type="reaction ID" value="UER00946"/>
</dbReference>
<dbReference type="GO" id="GO:0005737">
    <property type="term" value="C:cytoplasm"/>
    <property type="evidence" value="ECO:0007669"/>
    <property type="project" value="InterPro"/>
</dbReference>
<dbReference type="GO" id="GO:0005886">
    <property type="term" value="C:plasma membrane"/>
    <property type="evidence" value="ECO:0007669"/>
    <property type="project" value="UniProtKB-SubCell"/>
</dbReference>
<dbReference type="GO" id="GO:0106430">
    <property type="term" value="F:dihydroorotate dehydrogenase (quinone) activity"/>
    <property type="evidence" value="ECO:0007669"/>
    <property type="project" value="UniProtKB-EC"/>
</dbReference>
<dbReference type="GO" id="GO:0006207">
    <property type="term" value="P:'de novo' pyrimidine nucleobase biosynthetic process"/>
    <property type="evidence" value="ECO:0007669"/>
    <property type="project" value="InterPro"/>
</dbReference>
<dbReference type="GO" id="GO:0044205">
    <property type="term" value="P:'de novo' UMP biosynthetic process"/>
    <property type="evidence" value="ECO:0007669"/>
    <property type="project" value="UniProtKB-UniRule"/>
</dbReference>
<dbReference type="CDD" id="cd04738">
    <property type="entry name" value="DHOD_2_like"/>
    <property type="match status" value="1"/>
</dbReference>
<dbReference type="Gene3D" id="3.20.20.70">
    <property type="entry name" value="Aldolase class I"/>
    <property type="match status" value="1"/>
</dbReference>
<dbReference type="HAMAP" id="MF_00225">
    <property type="entry name" value="DHO_dh_type2"/>
    <property type="match status" value="1"/>
</dbReference>
<dbReference type="InterPro" id="IPR013785">
    <property type="entry name" value="Aldolase_TIM"/>
</dbReference>
<dbReference type="InterPro" id="IPR050074">
    <property type="entry name" value="DHO_dehydrogenase"/>
</dbReference>
<dbReference type="InterPro" id="IPR005719">
    <property type="entry name" value="Dihydroorotate_DH_2"/>
</dbReference>
<dbReference type="InterPro" id="IPR005720">
    <property type="entry name" value="Dihydroorotate_DH_cat"/>
</dbReference>
<dbReference type="InterPro" id="IPR001295">
    <property type="entry name" value="Dihydroorotate_DH_CS"/>
</dbReference>
<dbReference type="NCBIfam" id="NF003652">
    <property type="entry name" value="PRK05286.2-5"/>
    <property type="match status" value="1"/>
</dbReference>
<dbReference type="NCBIfam" id="TIGR01036">
    <property type="entry name" value="pyrD_sub2"/>
    <property type="match status" value="1"/>
</dbReference>
<dbReference type="PANTHER" id="PTHR48109:SF4">
    <property type="entry name" value="DIHYDROOROTATE DEHYDROGENASE (QUINONE), MITOCHONDRIAL"/>
    <property type="match status" value="1"/>
</dbReference>
<dbReference type="PANTHER" id="PTHR48109">
    <property type="entry name" value="DIHYDROOROTATE DEHYDROGENASE (QUINONE), MITOCHONDRIAL-RELATED"/>
    <property type="match status" value="1"/>
</dbReference>
<dbReference type="Pfam" id="PF01180">
    <property type="entry name" value="DHO_dh"/>
    <property type="match status" value="1"/>
</dbReference>
<dbReference type="SUPFAM" id="SSF51395">
    <property type="entry name" value="FMN-linked oxidoreductases"/>
    <property type="match status" value="1"/>
</dbReference>
<dbReference type="PROSITE" id="PS00911">
    <property type="entry name" value="DHODEHASE_1"/>
    <property type="match status" value="1"/>
</dbReference>
<sequence>MNRSEALFYRYGIRPILFRLGRGDAETAHERTLHILALISRSRLLCKTIGYLTTIRDQRLQRTVCGIPFPNPVGLAAGMDKDGVAIPAWAALGFGFVEVGTVTHHPQPGNPRPRLFRLPEQEALINRMGFNNQGAASLARRLARLQPAPIPVGVSIGKSKITPLEQAIDDYRASFRQLFPYAAYIAINVSSPNTPGLRQLQDADQLRALLAALQHDNAELGRTDQRGPRPLLVKIAPDLSDTAIEEVLTVCADHGVAGIIATNTTISREGLTGVDPRLAAEAGGLSGRPLIARALHVVRLIARLTGNRLPIIGVGGIHTPDDGLRMLEAGASLIQIYTGLVYYGPLLPRRINRAILTHSKVQQ</sequence>
<evidence type="ECO:0000255" key="1">
    <source>
        <dbReference type="HAMAP-Rule" id="MF_00225"/>
    </source>
</evidence>
<reference key="1">
    <citation type="submission" date="2009-01" db="EMBL/GenBank/DDBJ databases">
        <title>Complete sequence of Chloroflexus sp. Y-400-fl.</title>
        <authorList>
            <consortium name="US DOE Joint Genome Institute"/>
            <person name="Lucas S."/>
            <person name="Copeland A."/>
            <person name="Lapidus A."/>
            <person name="Glavina del Rio T."/>
            <person name="Dalin E."/>
            <person name="Tice H."/>
            <person name="Bruce D."/>
            <person name="Goodwin L."/>
            <person name="Pitluck S."/>
            <person name="Sims D."/>
            <person name="Kiss H."/>
            <person name="Brettin T."/>
            <person name="Detter J.C."/>
            <person name="Han C."/>
            <person name="Larimer F."/>
            <person name="Land M."/>
            <person name="Hauser L."/>
            <person name="Kyrpides N."/>
            <person name="Ovchinnikova G."/>
            <person name="Bryant D.A."/>
            <person name="Richardson P."/>
        </authorList>
    </citation>
    <scope>NUCLEOTIDE SEQUENCE [LARGE SCALE GENOMIC DNA]</scope>
    <source>
        <strain>ATCC 29364 / DSM 637 / Y-400-fl</strain>
    </source>
</reference>
<keyword id="KW-1003">Cell membrane</keyword>
<keyword id="KW-0285">Flavoprotein</keyword>
<keyword id="KW-0288">FMN</keyword>
<keyword id="KW-0472">Membrane</keyword>
<keyword id="KW-0560">Oxidoreductase</keyword>
<keyword id="KW-0665">Pyrimidine biosynthesis</keyword>
<feature type="chain" id="PRO_1000195064" description="Dihydroorotate dehydrogenase (quinone)">
    <location>
        <begin position="1"/>
        <end position="363"/>
    </location>
</feature>
<feature type="active site" description="Nucleophile" evidence="1">
    <location>
        <position position="191"/>
    </location>
</feature>
<feature type="binding site" evidence="1">
    <location>
        <begin position="77"/>
        <end position="81"/>
    </location>
    <ligand>
        <name>FMN</name>
        <dbReference type="ChEBI" id="CHEBI:58210"/>
    </ligand>
</feature>
<feature type="binding site" evidence="1">
    <location>
        <position position="81"/>
    </location>
    <ligand>
        <name>substrate</name>
    </ligand>
</feature>
<feature type="binding site" evidence="1">
    <location>
        <position position="101"/>
    </location>
    <ligand>
        <name>FMN</name>
        <dbReference type="ChEBI" id="CHEBI:58210"/>
    </ligand>
</feature>
<feature type="binding site" evidence="1">
    <location>
        <begin position="126"/>
        <end position="130"/>
    </location>
    <ligand>
        <name>substrate</name>
    </ligand>
</feature>
<feature type="binding site" evidence="1">
    <location>
        <position position="155"/>
    </location>
    <ligand>
        <name>FMN</name>
        <dbReference type="ChEBI" id="CHEBI:58210"/>
    </ligand>
</feature>
<feature type="binding site" evidence="1">
    <location>
        <position position="188"/>
    </location>
    <ligand>
        <name>FMN</name>
        <dbReference type="ChEBI" id="CHEBI:58210"/>
    </ligand>
</feature>
<feature type="binding site" evidence="1">
    <location>
        <position position="188"/>
    </location>
    <ligand>
        <name>substrate</name>
    </ligand>
</feature>
<feature type="binding site" evidence="1">
    <location>
        <position position="193"/>
    </location>
    <ligand>
        <name>substrate</name>
    </ligand>
</feature>
<feature type="binding site" evidence="1">
    <location>
        <position position="234"/>
    </location>
    <ligand>
        <name>FMN</name>
        <dbReference type="ChEBI" id="CHEBI:58210"/>
    </ligand>
</feature>
<feature type="binding site" evidence="1">
    <location>
        <position position="262"/>
    </location>
    <ligand>
        <name>FMN</name>
        <dbReference type="ChEBI" id="CHEBI:58210"/>
    </ligand>
</feature>
<feature type="binding site" evidence="1">
    <location>
        <begin position="263"/>
        <end position="264"/>
    </location>
    <ligand>
        <name>substrate</name>
    </ligand>
</feature>
<feature type="binding site" evidence="1">
    <location>
        <position position="287"/>
    </location>
    <ligand>
        <name>FMN</name>
        <dbReference type="ChEBI" id="CHEBI:58210"/>
    </ligand>
</feature>
<feature type="binding site" evidence="1">
    <location>
        <position position="316"/>
    </location>
    <ligand>
        <name>FMN</name>
        <dbReference type="ChEBI" id="CHEBI:58210"/>
    </ligand>
</feature>
<feature type="binding site" evidence="1">
    <location>
        <begin position="337"/>
        <end position="338"/>
    </location>
    <ligand>
        <name>FMN</name>
        <dbReference type="ChEBI" id="CHEBI:58210"/>
    </ligand>
</feature>
<proteinExistence type="inferred from homology"/>
<comment type="function">
    <text evidence="1">Catalyzes the conversion of dihydroorotate to orotate with quinone as electron acceptor.</text>
</comment>
<comment type="catalytic activity">
    <reaction evidence="1">
        <text>(S)-dihydroorotate + a quinone = orotate + a quinol</text>
        <dbReference type="Rhea" id="RHEA:30187"/>
        <dbReference type="ChEBI" id="CHEBI:24646"/>
        <dbReference type="ChEBI" id="CHEBI:30839"/>
        <dbReference type="ChEBI" id="CHEBI:30864"/>
        <dbReference type="ChEBI" id="CHEBI:132124"/>
        <dbReference type="EC" id="1.3.5.2"/>
    </reaction>
</comment>
<comment type="cofactor">
    <cofactor evidence="1">
        <name>FMN</name>
        <dbReference type="ChEBI" id="CHEBI:58210"/>
    </cofactor>
    <text evidence="1">Binds 1 FMN per subunit.</text>
</comment>
<comment type="pathway">
    <text evidence="1">Pyrimidine metabolism; UMP biosynthesis via de novo pathway; orotate from (S)-dihydroorotate (quinone route): step 1/1.</text>
</comment>
<comment type="subunit">
    <text evidence="1">Monomer.</text>
</comment>
<comment type="subcellular location">
    <subcellularLocation>
        <location evidence="1">Cell membrane</location>
        <topology evidence="1">Peripheral membrane protein</topology>
    </subcellularLocation>
</comment>
<comment type="similarity">
    <text evidence="1">Belongs to the dihydroorotate dehydrogenase family. Type 2 subfamily.</text>
</comment>
<protein>
    <recommendedName>
        <fullName evidence="1">Dihydroorotate dehydrogenase (quinone)</fullName>
        <ecNumber evidence="1">1.3.5.2</ecNumber>
    </recommendedName>
    <alternativeName>
        <fullName evidence="1">DHOdehase</fullName>
        <shortName evidence="1">DHOD</shortName>
        <shortName evidence="1">DHODase</shortName>
    </alternativeName>
    <alternativeName>
        <fullName evidence="1">Dihydroorotate oxidase</fullName>
    </alternativeName>
</protein>
<organism>
    <name type="scientific">Chloroflexus aurantiacus (strain ATCC 29364 / DSM 637 / Y-400-fl)</name>
    <dbReference type="NCBI Taxonomy" id="480224"/>
    <lineage>
        <taxon>Bacteria</taxon>
        <taxon>Bacillati</taxon>
        <taxon>Chloroflexota</taxon>
        <taxon>Chloroflexia</taxon>
        <taxon>Chloroflexales</taxon>
        <taxon>Chloroflexineae</taxon>
        <taxon>Chloroflexaceae</taxon>
        <taxon>Chloroflexus</taxon>
    </lineage>
</organism>
<gene>
    <name evidence="1" type="primary">pyrD</name>
    <name type="ordered locus">Chy400_4240</name>
</gene>
<name>PYRD_CHLSY</name>
<accession>B9LHC1</accession>